<accession>F4JLP5</accession>
<accession>Q9M5K4</accession>
<name>PLPD2_ARATH</name>
<feature type="transit peptide" description="Chloroplast" evidence="2">
    <location>
        <begin position="1"/>
        <end position="67"/>
    </location>
</feature>
<feature type="chain" id="PRO_0000423494" description="Dihydrolipoyl dehydrogenase 2, chloroplastic">
    <location>
        <begin position="68"/>
        <end position="567"/>
    </location>
</feature>
<feature type="active site" description="Proton acceptor" evidence="1">
    <location>
        <position position="536"/>
    </location>
</feature>
<feature type="binding site" evidence="1">
    <location>
        <begin position="114"/>
        <end position="122"/>
    </location>
    <ligand>
        <name>FAD</name>
        <dbReference type="ChEBI" id="CHEBI:57692"/>
    </ligand>
</feature>
<feature type="binding site" evidence="1">
    <location>
        <position position="131"/>
    </location>
    <ligand>
        <name>FAD</name>
        <dbReference type="ChEBI" id="CHEBI:57692"/>
    </ligand>
</feature>
<feature type="binding site" evidence="1">
    <location>
        <position position="197"/>
    </location>
    <ligand>
        <name>FAD</name>
        <dbReference type="ChEBI" id="CHEBI:57692"/>
    </ligand>
</feature>
<feature type="binding site" evidence="1">
    <location>
        <begin position="221"/>
        <end position="223"/>
    </location>
    <ligand>
        <name>FAD</name>
        <dbReference type="ChEBI" id="CHEBI:57692"/>
    </ligand>
</feature>
<feature type="binding site" evidence="1">
    <location>
        <begin position="258"/>
        <end position="265"/>
    </location>
    <ligand>
        <name>NAD(+)</name>
        <dbReference type="ChEBI" id="CHEBI:57540"/>
    </ligand>
</feature>
<feature type="binding site" evidence="1">
    <location>
        <position position="281"/>
    </location>
    <ligand>
        <name>NAD(+)</name>
        <dbReference type="ChEBI" id="CHEBI:57540"/>
    </ligand>
</feature>
<feature type="binding site" evidence="1">
    <location>
        <position position="354"/>
    </location>
    <ligand>
        <name>NAD(+)</name>
        <dbReference type="ChEBI" id="CHEBI:57540"/>
    </ligand>
</feature>
<feature type="binding site" evidence="1">
    <location>
        <position position="400"/>
    </location>
    <ligand>
        <name>FAD</name>
        <dbReference type="ChEBI" id="CHEBI:57692"/>
    </ligand>
</feature>
<feature type="binding site" evidence="1">
    <location>
        <begin position="406"/>
        <end position="409"/>
    </location>
    <ligand>
        <name>FAD</name>
        <dbReference type="ChEBI" id="CHEBI:57692"/>
    </ligand>
</feature>
<feature type="disulfide bond" description="Redox-active" evidence="1">
    <location>
        <begin position="122"/>
        <end position="127"/>
    </location>
</feature>
<gene>
    <name type="primary">LPD2</name>
    <name type="ordered locus">At4g16155</name>
    <name type="ORF">FCAALL.61</name>
</gene>
<evidence type="ECO:0000250" key="1"/>
<evidence type="ECO:0000255" key="2"/>
<evidence type="ECO:0000269" key="3">
    <source>
    </source>
</evidence>
<evidence type="ECO:0000269" key="4">
    <source>
    </source>
</evidence>
<evidence type="ECO:0000305" key="5"/>
<comment type="function">
    <text evidence="3">Lipoamide dehydrogenase is a component of the plastidial pyruvate dehydrogenase complex (PDC).</text>
</comment>
<comment type="catalytic activity">
    <reaction>
        <text>N(6)-[(R)-dihydrolipoyl]-L-lysyl-[protein] + NAD(+) = N(6)-[(R)-lipoyl]-L-lysyl-[protein] + NADH + H(+)</text>
        <dbReference type="Rhea" id="RHEA:15045"/>
        <dbReference type="Rhea" id="RHEA-COMP:10474"/>
        <dbReference type="Rhea" id="RHEA-COMP:10475"/>
        <dbReference type="ChEBI" id="CHEBI:15378"/>
        <dbReference type="ChEBI" id="CHEBI:57540"/>
        <dbReference type="ChEBI" id="CHEBI:57945"/>
        <dbReference type="ChEBI" id="CHEBI:83099"/>
        <dbReference type="ChEBI" id="CHEBI:83100"/>
        <dbReference type="EC" id="1.8.1.4"/>
    </reaction>
</comment>
<comment type="cofactor">
    <cofactor evidence="1">
        <name>FAD</name>
        <dbReference type="ChEBI" id="CHEBI:57692"/>
    </cofactor>
    <text evidence="1">Binds 1 FAD per subunit.</text>
</comment>
<comment type="subunit">
    <text evidence="1">Homodimer (By similarity). Part of the plastidial pyruvate dehydrogenase complex (PDC) containing multiple copies of three enzymatic components: pyruvate dehydrogenase (E1), dihydrolipoamide acetyltransferase (E2) and lipoamide dehydrogenase (E3).</text>
</comment>
<comment type="subcellular location">
    <subcellularLocation>
        <location evidence="1">Plastid</location>
        <location evidence="1">Chloroplast stroma</location>
    </subcellularLocation>
</comment>
<comment type="tissue specificity">
    <text evidence="3">Expressed mainly in flower buds and immature siliques, and to a lesser extent in flowers.</text>
</comment>
<comment type="disruption phenotype">
    <text evidence="4">Arsenate hypersensitivity.</text>
</comment>
<comment type="miscellaneous">
    <text evidence="1">The active site is a redox-active disulfide bond.</text>
</comment>
<comment type="similarity">
    <text evidence="5">Belongs to the class-I pyridine nucleotide-disulfide oxidoreductase family.</text>
</comment>
<organism>
    <name type="scientific">Arabidopsis thaliana</name>
    <name type="common">Mouse-ear cress</name>
    <dbReference type="NCBI Taxonomy" id="3702"/>
    <lineage>
        <taxon>Eukaryota</taxon>
        <taxon>Viridiplantae</taxon>
        <taxon>Streptophyta</taxon>
        <taxon>Embryophyta</taxon>
        <taxon>Tracheophyta</taxon>
        <taxon>Spermatophyta</taxon>
        <taxon>Magnoliopsida</taxon>
        <taxon>eudicotyledons</taxon>
        <taxon>Gunneridae</taxon>
        <taxon>Pentapetalae</taxon>
        <taxon>rosids</taxon>
        <taxon>malvids</taxon>
        <taxon>Brassicales</taxon>
        <taxon>Brassicaceae</taxon>
        <taxon>Camelineae</taxon>
        <taxon>Arabidopsis</taxon>
    </lineage>
</organism>
<keyword id="KW-0150">Chloroplast</keyword>
<keyword id="KW-1015">Disulfide bond</keyword>
<keyword id="KW-0274">FAD</keyword>
<keyword id="KW-0285">Flavoprotein</keyword>
<keyword id="KW-0520">NAD</keyword>
<keyword id="KW-0560">Oxidoreductase</keyword>
<keyword id="KW-0934">Plastid</keyword>
<keyword id="KW-0676">Redox-active center</keyword>
<keyword id="KW-1185">Reference proteome</keyword>
<keyword id="KW-0809">Transit peptide</keyword>
<proteinExistence type="evidence at transcript level"/>
<sequence length="567" mass="60145">MQSVLSLSFSQASLPLANRTLCSSNAAPSTPRNLRFCGLRREAFCFSPSKQLTSCRFHIQSRRIEVSAAASSSAGNGAPSKSFDYDLIIIGAGVGGHGAALHAVEKGLKTAIIEGDVVGGTCVNRGCVPSKALLAVSGRMRELQNEHHMKAFGLQVSAAGYDRQGVADHASNLATKIRNNLTNSMKALGVDILTGFGAVLGPQKVKYGDNIITGKDIIIATGSVPFVPKGIEVDGKTVITSDHALKLESVPDWIAIVGSGYIGLEFSDVYTALGSEVTFIEALDQLMPGFDPEISKLAQRVLINTRKIDYHTGVFASKITPAKDGKPVLIELIDAKTKEPKDTLEVDAALIATGRAPFTNGLGLENINVTTQRGFIPVDERMRVIDGNGKLVPHLYCIGDANGKLMLAHAASAQGISVVEQVTGRDHVLNHLSIPAACFTHPEISMVGLTEPQAREKAEKEGFKVSIAKTSFKANTKALAENEGEGLAKMIYRPDNGEILGVHIFGLHAADLIHEASNAIALGTRIQDIKLAVHAHPTLSEVVDELFKAAKVDSPASVTAQSVKVTV</sequence>
<dbReference type="EC" id="1.8.1.4"/>
<dbReference type="EMBL" id="AF228638">
    <property type="protein sequence ID" value="AAF37699.1"/>
    <property type="molecule type" value="mRNA"/>
</dbReference>
<dbReference type="EMBL" id="Z97340">
    <property type="status" value="NOT_ANNOTATED_CDS"/>
    <property type="molecule type" value="Genomic_DNA"/>
</dbReference>
<dbReference type="EMBL" id="AL161543">
    <property type="status" value="NOT_ANNOTATED_CDS"/>
    <property type="molecule type" value="Genomic_DNA"/>
</dbReference>
<dbReference type="EMBL" id="CP002687">
    <property type="protein sequence ID" value="AEE83704.2"/>
    <property type="molecule type" value="Genomic_DNA"/>
</dbReference>
<dbReference type="EMBL" id="AY050877">
    <property type="protein sequence ID" value="AAK92814.1"/>
    <property type="molecule type" value="mRNA"/>
</dbReference>
<dbReference type="EMBL" id="AY054195">
    <property type="protein sequence ID" value="AAL06856.1"/>
    <property type="molecule type" value="mRNA"/>
</dbReference>
<dbReference type="EMBL" id="AY113958">
    <property type="protein sequence ID" value="AAM45006.1"/>
    <property type="molecule type" value="mRNA"/>
</dbReference>
<dbReference type="RefSeq" id="NP_567487.5">
    <property type="nucleotide sequence ID" value="NM_117711.8"/>
</dbReference>
<dbReference type="SMR" id="F4JLP5"/>
<dbReference type="BioGRID" id="12601">
    <property type="interactions" value="4"/>
</dbReference>
<dbReference type="FunCoup" id="F4JLP5">
    <property type="interactions" value="1019"/>
</dbReference>
<dbReference type="STRING" id="3702.F4JLP5"/>
<dbReference type="iPTMnet" id="F4JLP5"/>
<dbReference type="MetOSite" id="F4JLP5"/>
<dbReference type="PaxDb" id="3702-AT4G16155.1"/>
<dbReference type="ProteomicsDB" id="226203"/>
<dbReference type="EnsemblPlants" id="AT4G16155.1">
    <property type="protein sequence ID" value="AT4G16155.1"/>
    <property type="gene ID" value="AT4G16155"/>
</dbReference>
<dbReference type="GeneID" id="827307"/>
<dbReference type="Gramene" id="AT4G16155.1">
    <property type="protein sequence ID" value="AT4G16155.1"/>
    <property type="gene ID" value="AT4G16155"/>
</dbReference>
<dbReference type="KEGG" id="ath:AT4G16155"/>
<dbReference type="Araport" id="AT4G16155"/>
<dbReference type="TAIR" id="AT4G16155"/>
<dbReference type="eggNOG" id="KOG1335">
    <property type="taxonomic scope" value="Eukaryota"/>
</dbReference>
<dbReference type="HOGENOM" id="CLU_016755_0_1_1"/>
<dbReference type="InParanoid" id="F4JLP5"/>
<dbReference type="OMA" id="MRTEKYV"/>
<dbReference type="PhylomeDB" id="F4JLP5"/>
<dbReference type="PRO" id="PR:F4JLP5"/>
<dbReference type="Proteomes" id="UP000006548">
    <property type="component" value="Chromosome 4"/>
</dbReference>
<dbReference type="ExpressionAtlas" id="F4JLP5">
    <property type="expression patterns" value="baseline and differential"/>
</dbReference>
<dbReference type="GO" id="GO:0009507">
    <property type="term" value="C:chloroplast"/>
    <property type="evidence" value="ECO:0000314"/>
    <property type="project" value="TAIR"/>
</dbReference>
<dbReference type="GO" id="GO:0009941">
    <property type="term" value="C:chloroplast envelope"/>
    <property type="evidence" value="ECO:0007005"/>
    <property type="project" value="TAIR"/>
</dbReference>
<dbReference type="GO" id="GO:0009570">
    <property type="term" value="C:chloroplast stroma"/>
    <property type="evidence" value="ECO:0007005"/>
    <property type="project" value="TAIR"/>
</dbReference>
<dbReference type="GO" id="GO:0005829">
    <property type="term" value="C:cytosol"/>
    <property type="evidence" value="ECO:0007005"/>
    <property type="project" value="TAIR"/>
</dbReference>
<dbReference type="GO" id="GO:0004148">
    <property type="term" value="F:dihydrolipoyl dehydrogenase (NADH) activity"/>
    <property type="evidence" value="ECO:0007669"/>
    <property type="project" value="UniProtKB-EC"/>
</dbReference>
<dbReference type="GO" id="GO:0046685">
    <property type="term" value="P:response to arsenic-containing substance"/>
    <property type="evidence" value="ECO:0000315"/>
    <property type="project" value="UniProtKB"/>
</dbReference>
<dbReference type="FunFam" id="3.30.390.30:FF:000001">
    <property type="entry name" value="Dihydrolipoyl dehydrogenase"/>
    <property type="match status" value="1"/>
</dbReference>
<dbReference type="FunFam" id="3.50.50.60:FF:000043">
    <property type="entry name" value="Putative dihydrolipoyl dehydrogenase"/>
    <property type="match status" value="1"/>
</dbReference>
<dbReference type="Gene3D" id="3.30.390.30">
    <property type="match status" value="1"/>
</dbReference>
<dbReference type="Gene3D" id="3.50.50.60">
    <property type="entry name" value="FAD/NAD(P)-binding domain"/>
    <property type="match status" value="2"/>
</dbReference>
<dbReference type="InterPro" id="IPR050151">
    <property type="entry name" value="Class-I_Pyr_Nuc-Dis_Oxidored"/>
</dbReference>
<dbReference type="InterPro" id="IPR036188">
    <property type="entry name" value="FAD/NAD-bd_sf"/>
</dbReference>
<dbReference type="InterPro" id="IPR023753">
    <property type="entry name" value="FAD/NAD-binding_dom"/>
</dbReference>
<dbReference type="InterPro" id="IPR016156">
    <property type="entry name" value="FAD/NAD-linked_Rdtase_dimer_sf"/>
</dbReference>
<dbReference type="InterPro" id="IPR001100">
    <property type="entry name" value="Pyr_nuc-diS_OxRdtase"/>
</dbReference>
<dbReference type="InterPro" id="IPR004099">
    <property type="entry name" value="Pyr_nucl-diS_OxRdtase_dimer"/>
</dbReference>
<dbReference type="InterPro" id="IPR012999">
    <property type="entry name" value="Pyr_OxRdtase_I_AS"/>
</dbReference>
<dbReference type="PANTHER" id="PTHR22912:SF207">
    <property type="entry name" value="DIHYDROLIPOYL DEHYDROGENASE 2, CHLOROPLASTIC"/>
    <property type="match status" value="1"/>
</dbReference>
<dbReference type="PANTHER" id="PTHR22912">
    <property type="entry name" value="DISULFIDE OXIDOREDUCTASE"/>
    <property type="match status" value="1"/>
</dbReference>
<dbReference type="Pfam" id="PF07992">
    <property type="entry name" value="Pyr_redox_2"/>
    <property type="match status" value="1"/>
</dbReference>
<dbReference type="Pfam" id="PF02852">
    <property type="entry name" value="Pyr_redox_dim"/>
    <property type="match status" value="1"/>
</dbReference>
<dbReference type="PIRSF" id="PIRSF000350">
    <property type="entry name" value="Mercury_reductase_MerA"/>
    <property type="match status" value="1"/>
</dbReference>
<dbReference type="PRINTS" id="PR00368">
    <property type="entry name" value="FADPNR"/>
</dbReference>
<dbReference type="PRINTS" id="PR00411">
    <property type="entry name" value="PNDRDTASEI"/>
</dbReference>
<dbReference type="SUPFAM" id="SSF51905">
    <property type="entry name" value="FAD/NAD(P)-binding domain"/>
    <property type="match status" value="1"/>
</dbReference>
<dbReference type="SUPFAM" id="SSF55424">
    <property type="entry name" value="FAD/NAD-linked reductases, dimerisation (C-terminal) domain"/>
    <property type="match status" value="1"/>
</dbReference>
<dbReference type="PROSITE" id="PS00076">
    <property type="entry name" value="PYRIDINE_REDOX_1"/>
    <property type="match status" value="1"/>
</dbReference>
<reference key="1">
    <citation type="journal article" date="2000" name="FEBS Lett.">
        <title>Molecular evidence of a unique lipoamide dehydrogenase in plastids: analysis of plastidic lipoamide dehydrogenase from Arabidopsis thaliana.</title>
        <authorList>
            <person name="Lutziger I."/>
            <person name="Oliver D.J."/>
        </authorList>
    </citation>
    <scope>NUCLEOTIDE SEQUENCE [MRNA]</scope>
    <scope>FUNCTION</scope>
    <scope>TISSUE SPECIFICITY</scope>
</reference>
<reference key="2">
    <citation type="journal article" date="1998" name="Nature">
        <title>Analysis of 1.9 Mb of contiguous sequence from chromosome 4 of Arabidopsis thaliana.</title>
        <authorList>
            <person name="Bevan M."/>
            <person name="Bancroft I."/>
            <person name="Bent E."/>
            <person name="Love K."/>
            <person name="Goodman H.M."/>
            <person name="Dean C."/>
            <person name="Bergkamp R."/>
            <person name="Dirkse W."/>
            <person name="van Staveren M."/>
            <person name="Stiekema W."/>
            <person name="Drost L."/>
            <person name="Ridley P."/>
            <person name="Hudson S.-A."/>
            <person name="Patel K."/>
            <person name="Murphy G."/>
            <person name="Piffanelli P."/>
            <person name="Wedler H."/>
            <person name="Wedler E."/>
            <person name="Wambutt R."/>
            <person name="Weitzenegger T."/>
            <person name="Pohl T."/>
            <person name="Terryn N."/>
            <person name="Gielen J."/>
            <person name="Villarroel R."/>
            <person name="De Clercq R."/>
            <person name="van Montagu M."/>
            <person name="Lecharny A."/>
            <person name="Aubourg S."/>
            <person name="Gy I."/>
            <person name="Kreis M."/>
            <person name="Lao N."/>
            <person name="Kavanagh T."/>
            <person name="Hempel S."/>
            <person name="Kotter P."/>
            <person name="Entian K.-D."/>
            <person name="Rieger M."/>
            <person name="Schaefer M."/>
            <person name="Funk B."/>
            <person name="Mueller-Auer S."/>
            <person name="Silvey M."/>
            <person name="James R."/>
            <person name="Monfort A."/>
            <person name="Pons A."/>
            <person name="Puigdomenech P."/>
            <person name="Douka A."/>
            <person name="Voukelatou E."/>
            <person name="Milioni D."/>
            <person name="Hatzopoulos P."/>
            <person name="Piravandi E."/>
            <person name="Obermaier B."/>
            <person name="Hilbert H."/>
            <person name="Duesterhoeft A."/>
            <person name="Moores T."/>
            <person name="Jones J.D.G."/>
            <person name="Eneva T."/>
            <person name="Palme K."/>
            <person name="Benes V."/>
            <person name="Rechmann S."/>
            <person name="Ansorge W."/>
            <person name="Cooke R."/>
            <person name="Berger C."/>
            <person name="Delseny M."/>
            <person name="Voet M."/>
            <person name="Volckaert G."/>
            <person name="Mewes H.-W."/>
            <person name="Klosterman S."/>
            <person name="Schueller C."/>
            <person name="Chalwatzis N."/>
        </authorList>
    </citation>
    <scope>NUCLEOTIDE SEQUENCE [LARGE SCALE GENOMIC DNA]</scope>
    <source>
        <strain>cv. Columbia</strain>
    </source>
</reference>
<reference key="3">
    <citation type="journal article" date="1999" name="Nature">
        <title>Sequence and analysis of chromosome 4 of the plant Arabidopsis thaliana.</title>
        <authorList>
            <person name="Mayer K.F.X."/>
            <person name="Schueller C."/>
            <person name="Wambutt R."/>
            <person name="Murphy G."/>
            <person name="Volckaert G."/>
            <person name="Pohl T."/>
            <person name="Duesterhoeft A."/>
            <person name="Stiekema W."/>
            <person name="Entian K.-D."/>
            <person name="Terryn N."/>
            <person name="Harris B."/>
            <person name="Ansorge W."/>
            <person name="Brandt P."/>
            <person name="Grivell L.A."/>
            <person name="Rieger M."/>
            <person name="Weichselgartner M."/>
            <person name="de Simone V."/>
            <person name="Obermaier B."/>
            <person name="Mache R."/>
            <person name="Mueller M."/>
            <person name="Kreis M."/>
            <person name="Delseny M."/>
            <person name="Puigdomenech P."/>
            <person name="Watson M."/>
            <person name="Schmidtheini T."/>
            <person name="Reichert B."/>
            <person name="Portetelle D."/>
            <person name="Perez-Alonso M."/>
            <person name="Boutry M."/>
            <person name="Bancroft I."/>
            <person name="Vos P."/>
            <person name="Hoheisel J."/>
            <person name="Zimmermann W."/>
            <person name="Wedler H."/>
            <person name="Ridley P."/>
            <person name="Langham S.-A."/>
            <person name="McCullagh B."/>
            <person name="Bilham L."/>
            <person name="Robben J."/>
            <person name="van der Schueren J."/>
            <person name="Grymonprez B."/>
            <person name="Chuang Y.-J."/>
            <person name="Vandenbussche F."/>
            <person name="Braeken M."/>
            <person name="Weltjens I."/>
            <person name="Voet M."/>
            <person name="Bastiaens I."/>
            <person name="Aert R."/>
            <person name="Defoor E."/>
            <person name="Weitzenegger T."/>
            <person name="Bothe G."/>
            <person name="Ramsperger U."/>
            <person name="Hilbert H."/>
            <person name="Braun M."/>
            <person name="Holzer E."/>
            <person name="Brandt A."/>
            <person name="Peters S."/>
            <person name="van Staveren M."/>
            <person name="Dirkse W."/>
            <person name="Mooijman P."/>
            <person name="Klein Lankhorst R."/>
            <person name="Rose M."/>
            <person name="Hauf J."/>
            <person name="Koetter P."/>
            <person name="Berneiser S."/>
            <person name="Hempel S."/>
            <person name="Feldpausch M."/>
            <person name="Lamberth S."/>
            <person name="Van den Daele H."/>
            <person name="De Keyser A."/>
            <person name="Buysshaert C."/>
            <person name="Gielen J."/>
            <person name="Villarroel R."/>
            <person name="De Clercq R."/>
            <person name="van Montagu M."/>
            <person name="Rogers J."/>
            <person name="Cronin A."/>
            <person name="Quail M.A."/>
            <person name="Bray-Allen S."/>
            <person name="Clark L."/>
            <person name="Doggett J."/>
            <person name="Hall S."/>
            <person name="Kay M."/>
            <person name="Lennard N."/>
            <person name="McLay K."/>
            <person name="Mayes R."/>
            <person name="Pettett A."/>
            <person name="Rajandream M.A."/>
            <person name="Lyne M."/>
            <person name="Benes V."/>
            <person name="Rechmann S."/>
            <person name="Borkova D."/>
            <person name="Bloecker H."/>
            <person name="Scharfe M."/>
            <person name="Grimm M."/>
            <person name="Loehnert T.-H."/>
            <person name="Dose S."/>
            <person name="de Haan M."/>
            <person name="Maarse A.C."/>
            <person name="Schaefer M."/>
            <person name="Mueller-Auer S."/>
            <person name="Gabel C."/>
            <person name="Fuchs M."/>
            <person name="Fartmann B."/>
            <person name="Granderath K."/>
            <person name="Dauner D."/>
            <person name="Herzl A."/>
            <person name="Neumann S."/>
            <person name="Argiriou A."/>
            <person name="Vitale D."/>
            <person name="Liguori R."/>
            <person name="Piravandi E."/>
            <person name="Massenet O."/>
            <person name="Quigley F."/>
            <person name="Clabauld G."/>
            <person name="Muendlein A."/>
            <person name="Felber R."/>
            <person name="Schnabl S."/>
            <person name="Hiller R."/>
            <person name="Schmidt W."/>
            <person name="Lecharny A."/>
            <person name="Aubourg S."/>
            <person name="Chefdor F."/>
            <person name="Cooke R."/>
            <person name="Berger C."/>
            <person name="Monfort A."/>
            <person name="Casacuberta E."/>
            <person name="Gibbons T."/>
            <person name="Weber N."/>
            <person name="Vandenbol M."/>
            <person name="Bargues M."/>
            <person name="Terol J."/>
            <person name="Torres A."/>
            <person name="Perez-Perez A."/>
            <person name="Purnelle B."/>
            <person name="Bent E."/>
            <person name="Johnson S."/>
            <person name="Tacon D."/>
            <person name="Jesse T."/>
            <person name="Heijnen L."/>
            <person name="Schwarz S."/>
            <person name="Scholler P."/>
            <person name="Heber S."/>
            <person name="Francs P."/>
            <person name="Bielke C."/>
            <person name="Frishman D."/>
            <person name="Haase D."/>
            <person name="Lemcke K."/>
            <person name="Mewes H.-W."/>
            <person name="Stocker S."/>
            <person name="Zaccaria P."/>
            <person name="Bevan M."/>
            <person name="Wilson R.K."/>
            <person name="de la Bastide M."/>
            <person name="Habermann K."/>
            <person name="Parnell L."/>
            <person name="Dedhia N."/>
            <person name="Gnoj L."/>
            <person name="Schutz K."/>
            <person name="Huang E."/>
            <person name="Spiegel L."/>
            <person name="Sekhon M."/>
            <person name="Murray J."/>
            <person name="Sheet P."/>
            <person name="Cordes M."/>
            <person name="Abu-Threideh J."/>
            <person name="Stoneking T."/>
            <person name="Kalicki J."/>
            <person name="Graves T."/>
            <person name="Harmon G."/>
            <person name="Edwards J."/>
            <person name="Latreille P."/>
            <person name="Courtney L."/>
            <person name="Cloud J."/>
            <person name="Abbott A."/>
            <person name="Scott K."/>
            <person name="Johnson D."/>
            <person name="Minx P."/>
            <person name="Bentley D."/>
            <person name="Fulton B."/>
            <person name="Miller N."/>
            <person name="Greco T."/>
            <person name="Kemp K."/>
            <person name="Kramer J."/>
            <person name="Fulton L."/>
            <person name="Mardis E."/>
            <person name="Dante M."/>
            <person name="Pepin K."/>
            <person name="Hillier L.W."/>
            <person name="Nelson J."/>
            <person name="Spieth J."/>
            <person name="Ryan E."/>
            <person name="Andrews S."/>
            <person name="Geisel C."/>
            <person name="Layman D."/>
            <person name="Du H."/>
            <person name="Ali J."/>
            <person name="Berghoff A."/>
            <person name="Jones K."/>
            <person name="Drone K."/>
            <person name="Cotton M."/>
            <person name="Joshu C."/>
            <person name="Antonoiu B."/>
            <person name="Zidanic M."/>
            <person name="Strong C."/>
            <person name="Sun H."/>
            <person name="Lamar B."/>
            <person name="Yordan C."/>
            <person name="Ma P."/>
            <person name="Zhong J."/>
            <person name="Preston R."/>
            <person name="Vil D."/>
            <person name="Shekher M."/>
            <person name="Matero A."/>
            <person name="Shah R."/>
            <person name="Swaby I.K."/>
            <person name="O'Shaughnessy A."/>
            <person name="Rodriguez M."/>
            <person name="Hoffman J."/>
            <person name="Till S."/>
            <person name="Granat S."/>
            <person name="Shohdy N."/>
            <person name="Hasegawa A."/>
            <person name="Hameed A."/>
            <person name="Lodhi M."/>
            <person name="Johnson A."/>
            <person name="Chen E."/>
            <person name="Marra M.A."/>
            <person name="Martienssen R."/>
            <person name="McCombie W.R."/>
        </authorList>
    </citation>
    <scope>NUCLEOTIDE SEQUENCE [LARGE SCALE GENOMIC DNA]</scope>
    <source>
        <strain>cv. Columbia</strain>
    </source>
</reference>
<reference key="4">
    <citation type="journal article" date="2017" name="Plant J.">
        <title>Araport11: a complete reannotation of the Arabidopsis thaliana reference genome.</title>
        <authorList>
            <person name="Cheng C.Y."/>
            <person name="Krishnakumar V."/>
            <person name="Chan A.P."/>
            <person name="Thibaud-Nissen F."/>
            <person name="Schobel S."/>
            <person name="Town C.D."/>
        </authorList>
    </citation>
    <scope>GENOME REANNOTATION</scope>
    <source>
        <strain>cv. Columbia</strain>
    </source>
</reference>
<reference key="5">
    <citation type="journal article" date="2003" name="Science">
        <title>Empirical analysis of transcriptional activity in the Arabidopsis genome.</title>
        <authorList>
            <person name="Yamada K."/>
            <person name="Lim J."/>
            <person name="Dale J.M."/>
            <person name="Chen H."/>
            <person name="Shinn P."/>
            <person name="Palm C.J."/>
            <person name="Southwick A.M."/>
            <person name="Wu H.C."/>
            <person name="Kim C.J."/>
            <person name="Nguyen M."/>
            <person name="Pham P.K."/>
            <person name="Cheuk R.F."/>
            <person name="Karlin-Newmann G."/>
            <person name="Liu S.X."/>
            <person name="Lam B."/>
            <person name="Sakano H."/>
            <person name="Wu T."/>
            <person name="Yu G."/>
            <person name="Miranda M."/>
            <person name="Quach H.L."/>
            <person name="Tripp M."/>
            <person name="Chang C.H."/>
            <person name="Lee J.M."/>
            <person name="Toriumi M.J."/>
            <person name="Chan M.M."/>
            <person name="Tang C.C."/>
            <person name="Onodera C.S."/>
            <person name="Deng J.M."/>
            <person name="Akiyama K."/>
            <person name="Ansari Y."/>
            <person name="Arakawa T."/>
            <person name="Banh J."/>
            <person name="Banno F."/>
            <person name="Bowser L."/>
            <person name="Brooks S.Y."/>
            <person name="Carninci P."/>
            <person name="Chao Q."/>
            <person name="Choy N."/>
            <person name="Enju A."/>
            <person name="Goldsmith A.D."/>
            <person name="Gurjal M."/>
            <person name="Hansen N.F."/>
            <person name="Hayashizaki Y."/>
            <person name="Johnson-Hopson C."/>
            <person name="Hsuan V.W."/>
            <person name="Iida K."/>
            <person name="Karnes M."/>
            <person name="Khan S."/>
            <person name="Koesema E."/>
            <person name="Ishida J."/>
            <person name="Jiang P.X."/>
            <person name="Jones T."/>
            <person name="Kawai J."/>
            <person name="Kamiya A."/>
            <person name="Meyers C."/>
            <person name="Nakajima M."/>
            <person name="Narusaka M."/>
            <person name="Seki M."/>
            <person name="Sakurai T."/>
            <person name="Satou M."/>
            <person name="Tamse R."/>
            <person name="Vaysberg M."/>
            <person name="Wallender E.K."/>
            <person name="Wong C."/>
            <person name="Yamamura Y."/>
            <person name="Yuan S."/>
            <person name="Shinozaki K."/>
            <person name="Davis R.W."/>
            <person name="Theologis A."/>
            <person name="Ecker J.R."/>
        </authorList>
    </citation>
    <scope>NUCLEOTIDE SEQUENCE [LARGE SCALE MRNA]</scope>
    <source>
        <strain>cv. Columbia</strain>
    </source>
</reference>
<reference key="6">
    <citation type="journal article" date="2010" name="Plant Physiol.">
        <title>Disruption of ptLPD1 or ptLPD2, genes that encode isoforms of the plastidial lipoamide dehydrogenase, confers arsenate hypersensitivity in Arabidopsis.</title>
        <authorList>
            <person name="Chen W."/>
            <person name="Chi Y."/>
            <person name="Taylor N.L."/>
            <person name="Lambers H."/>
            <person name="Finnegan P.M."/>
        </authorList>
    </citation>
    <scope>DISRUPTION PHENOTYPE</scope>
</reference>
<protein>
    <recommendedName>
        <fullName>Dihydrolipoyl dehydrogenase 2, chloroplastic</fullName>
        <shortName>ptLPD2</shortName>
        <ecNumber>1.8.1.4</ecNumber>
    </recommendedName>
    <alternativeName>
        <fullName>Dihydrolipoamide dehydrogenase 2</fullName>
    </alternativeName>
    <alternativeName>
        <fullName>Protein LIPOAMIDE DEHYDROGENASE 2</fullName>
    </alternativeName>
    <alternativeName>
        <fullName>Pyruvate dehydrogenase complex E3 subunit 2</fullName>
        <shortName>E3-2</shortName>
        <shortName>PDC-E3 2</shortName>
    </alternativeName>
</protein>